<keyword id="KW-1185">Reference proteome</keyword>
<keyword id="KW-0687">Ribonucleoprotein</keyword>
<keyword id="KW-0689">Ribosomal protein</keyword>
<evidence type="ECO:0000255" key="1">
    <source>
        <dbReference type="HAMAP-Rule" id="MF_00539"/>
    </source>
</evidence>
<evidence type="ECO:0000305" key="2"/>
<dbReference type="EMBL" id="CP000144">
    <property type="protein sequence ID" value="ABA80603.1"/>
    <property type="molecule type" value="Genomic_DNA"/>
</dbReference>
<dbReference type="RefSeq" id="WP_002723383.1">
    <property type="nucleotide sequence ID" value="NZ_CP030272.1"/>
</dbReference>
<dbReference type="RefSeq" id="YP_354504.1">
    <property type="nucleotide sequence ID" value="NC_007494.2"/>
</dbReference>
<dbReference type="SMR" id="Q3IXY1"/>
<dbReference type="STRING" id="272943.RSP_3820"/>
<dbReference type="EnsemblBacteria" id="ABA80603">
    <property type="protein sequence ID" value="ABA80603"/>
    <property type="gene ID" value="RSP_3820"/>
</dbReference>
<dbReference type="GeneID" id="67448501"/>
<dbReference type="KEGG" id="rsp:RSP_3820"/>
<dbReference type="PATRIC" id="fig|272943.9.peg.3406"/>
<dbReference type="eggNOG" id="COG0211">
    <property type="taxonomic scope" value="Bacteria"/>
</dbReference>
<dbReference type="OrthoDB" id="9803474at2"/>
<dbReference type="PhylomeDB" id="Q3IXY1"/>
<dbReference type="Proteomes" id="UP000002703">
    <property type="component" value="Chromosome 2"/>
</dbReference>
<dbReference type="GO" id="GO:0022625">
    <property type="term" value="C:cytosolic large ribosomal subunit"/>
    <property type="evidence" value="ECO:0007669"/>
    <property type="project" value="TreeGrafter"/>
</dbReference>
<dbReference type="GO" id="GO:0003735">
    <property type="term" value="F:structural constituent of ribosome"/>
    <property type="evidence" value="ECO:0007669"/>
    <property type="project" value="InterPro"/>
</dbReference>
<dbReference type="GO" id="GO:0006412">
    <property type="term" value="P:translation"/>
    <property type="evidence" value="ECO:0007669"/>
    <property type="project" value="UniProtKB-UniRule"/>
</dbReference>
<dbReference type="FunFam" id="2.40.50.100:FF:000060">
    <property type="entry name" value="Apicoplast ribosomal protein L27"/>
    <property type="match status" value="1"/>
</dbReference>
<dbReference type="Gene3D" id="2.40.50.100">
    <property type="match status" value="1"/>
</dbReference>
<dbReference type="HAMAP" id="MF_00539">
    <property type="entry name" value="Ribosomal_bL27"/>
    <property type="match status" value="1"/>
</dbReference>
<dbReference type="InterPro" id="IPR001684">
    <property type="entry name" value="Ribosomal_bL27"/>
</dbReference>
<dbReference type="InterPro" id="IPR018261">
    <property type="entry name" value="Ribosomal_bL27_CS"/>
</dbReference>
<dbReference type="NCBIfam" id="TIGR00062">
    <property type="entry name" value="L27"/>
    <property type="match status" value="1"/>
</dbReference>
<dbReference type="PANTHER" id="PTHR15893:SF0">
    <property type="entry name" value="LARGE RIBOSOMAL SUBUNIT PROTEIN BL27M"/>
    <property type="match status" value="1"/>
</dbReference>
<dbReference type="PANTHER" id="PTHR15893">
    <property type="entry name" value="RIBOSOMAL PROTEIN L27"/>
    <property type="match status" value="1"/>
</dbReference>
<dbReference type="Pfam" id="PF01016">
    <property type="entry name" value="Ribosomal_L27"/>
    <property type="match status" value="1"/>
</dbReference>
<dbReference type="PRINTS" id="PR00063">
    <property type="entry name" value="RIBOSOMALL27"/>
</dbReference>
<dbReference type="SUPFAM" id="SSF110324">
    <property type="entry name" value="Ribosomal L27 protein-like"/>
    <property type="match status" value="1"/>
</dbReference>
<dbReference type="PROSITE" id="PS00831">
    <property type="entry name" value="RIBOSOMAL_L27"/>
    <property type="match status" value="1"/>
</dbReference>
<proteinExistence type="inferred from homology"/>
<accession>Q3IXY1</accession>
<feature type="chain" id="PRO_1000017582" description="Large ribosomal subunit protein bL27">
    <location>
        <begin position="1"/>
        <end position="89"/>
    </location>
</feature>
<sequence>MAHKKAGGSSRNGRDSAGRRLGVKLYGGQAAIPGNIIVRQRGTTWFPGAGVGMGRDHTIFATVEGRVEFRKGLKGRTFISVLPTAEAAE</sequence>
<name>RL27_CERS4</name>
<comment type="similarity">
    <text evidence="1">Belongs to the bacterial ribosomal protein bL27 family.</text>
</comment>
<reference key="1">
    <citation type="submission" date="2005-09" db="EMBL/GenBank/DDBJ databases">
        <title>Complete sequence of chromosome 2 of Rhodobacter sphaeroides 2.4.1.</title>
        <authorList>
            <person name="Copeland A."/>
            <person name="Lucas S."/>
            <person name="Lapidus A."/>
            <person name="Barry K."/>
            <person name="Detter J.C."/>
            <person name="Glavina T."/>
            <person name="Hammon N."/>
            <person name="Israni S."/>
            <person name="Pitluck S."/>
            <person name="Richardson P."/>
            <person name="Mackenzie C."/>
            <person name="Choudhary M."/>
            <person name="Larimer F."/>
            <person name="Hauser L.J."/>
            <person name="Land M."/>
            <person name="Donohue T.J."/>
            <person name="Kaplan S."/>
        </authorList>
    </citation>
    <scope>NUCLEOTIDE SEQUENCE [LARGE SCALE GENOMIC DNA]</scope>
    <source>
        <strain>ATCC 17023 / DSM 158 / JCM 6121 / CCUG 31486 / LMG 2827 / NBRC 12203 / NCIMB 8253 / ATH 2.4.1.</strain>
    </source>
</reference>
<protein>
    <recommendedName>
        <fullName evidence="1">Large ribosomal subunit protein bL27</fullName>
    </recommendedName>
    <alternativeName>
        <fullName evidence="2">50S ribosomal protein L27</fullName>
    </alternativeName>
</protein>
<gene>
    <name evidence="1" type="primary">rpmA</name>
    <name type="ordered locus">RHOS4_30350</name>
    <name type="ORF">RSP_3820</name>
</gene>
<organism>
    <name type="scientific">Cereibacter sphaeroides (strain ATCC 17023 / DSM 158 / JCM 6121 / CCUG 31486 / LMG 2827 / NBRC 12203 / NCIMB 8253 / ATH 2.4.1.)</name>
    <name type="common">Rhodobacter sphaeroides</name>
    <dbReference type="NCBI Taxonomy" id="272943"/>
    <lineage>
        <taxon>Bacteria</taxon>
        <taxon>Pseudomonadati</taxon>
        <taxon>Pseudomonadota</taxon>
        <taxon>Alphaproteobacteria</taxon>
        <taxon>Rhodobacterales</taxon>
        <taxon>Paracoccaceae</taxon>
        <taxon>Cereibacter</taxon>
    </lineage>
</organism>